<evidence type="ECO:0000255" key="1">
    <source>
        <dbReference type="HAMAP-Rule" id="MF_01369"/>
    </source>
</evidence>
<evidence type="ECO:0000305" key="2"/>
<protein>
    <recommendedName>
        <fullName evidence="1">Large ribosomal subunit protein uL23</fullName>
    </recommendedName>
    <alternativeName>
        <fullName evidence="2">50S ribosomal protein L23</fullName>
    </alternativeName>
</protein>
<sequence>MSAKAEHYDVIRKPIITEKATMTSENGAVVFEVAIDSNKPQIKEAVEALFGVKVKAVNTTITKGKVKRFRGQLGKRKDVKKAYVTLEAGNTIDVSTGL</sequence>
<feature type="chain" id="PRO_0000272832" description="Large ribosomal subunit protein uL23">
    <location>
        <begin position="1"/>
        <end position="98"/>
    </location>
</feature>
<comment type="function">
    <text evidence="1">One of the early assembly proteins it binds 23S rRNA. One of the proteins that surrounds the polypeptide exit tunnel on the outside of the ribosome. Forms the main docking site for trigger factor binding to the ribosome.</text>
</comment>
<comment type="subunit">
    <text evidence="1">Part of the 50S ribosomal subunit. Contacts protein L29, and trigger factor when it is bound to the ribosome.</text>
</comment>
<comment type="similarity">
    <text evidence="1">Belongs to the universal ribosomal protein uL23 family.</text>
</comment>
<keyword id="KW-1185">Reference proteome</keyword>
<keyword id="KW-0687">Ribonucleoprotein</keyword>
<keyword id="KW-0689">Ribosomal protein</keyword>
<keyword id="KW-0694">RNA-binding</keyword>
<keyword id="KW-0699">rRNA-binding</keyword>
<dbReference type="EMBL" id="CP000362">
    <property type="protein sequence ID" value="ABG31041.1"/>
    <property type="molecule type" value="Genomic_DNA"/>
</dbReference>
<dbReference type="RefSeq" id="WP_011567661.1">
    <property type="nucleotide sequence ID" value="NC_008209.1"/>
</dbReference>
<dbReference type="SMR" id="Q16AF2"/>
<dbReference type="STRING" id="375451.RD1_1401"/>
<dbReference type="KEGG" id="rde:RD1_1401"/>
<dbReference type="eggNOG" id="COG0089">
    <property type="taxonomic scope" value="Bacteria"/>
</dbReference>
<dbReference type="HOGENOM" id="CLU_037562_3_1_5"/>
<dbReference type="OrthoDB" id="9793353at2"/>
<dbReference type="Proteomes" id="UP000007029">
    <property type="component" value="Chromosome"/>
</dbReference>
<dbReference type="GO" id="GO:1990904">
    <property type="term" value="C:ribonucleoprotein complex"/>
    <property type="evidence" value="ECO:0007669"/>
    <property type="project" value="UniProtKB-KW"/>
</dbReference>
<dbReference type="GO" id="GO:0005840">
    <property type="term" value="C:ribosome"/>
    <property type="evidence" value="ECO:0007669"/>
    <property type="project" value="UniProtKB-KW"/>
</dbReference>
<dbReference type="GO" id="GO:0019843">
    <property type="term" value="F:rRNA binding"/>
    <property type="evidence" value="ECO:0007669"/>
    <property type="project" value="UniProtKB-UniRule"/>
</dbReference>
<dbReference type="GO" id="GO:0003735">
    <property type="term" value="F:structural constituent of ribosome"/>
    <property type="evidence" value="ECO:0007669"/>
    <property type="project" value="InterPro"/>
</dbReference>
<dbReference type="GO" id="GO:0006412">
    <property type="term" value="P:translation"/>
    <property type="evidence" value="ECO:0007669"/>
    <property type="project" value="UniProtKB-UniRule"/>
</dbReference>
<dbReference type="FunFam" id="3.30.70.330:FF:000001">
    <property type="entry name" value="50S ribosomal protein L23"/>
    <property type="match status" value="1"/>
</dbReference>
<dbReference type="Gene3D" id="3.30.70.330">
    <property type="match status" value="1"/>
</dbReference>
<dbReference type="HAMAP" id="MF_01369_B">
    <property type="entry name" value="Ribosomal_uL23_B"/>
    <property type="match status" value="1"/>
</dbReference>
<dbReference type="InterPro" id="IPR012677">
    <property type="entry name" value="Nucleotide-bd_a/b_plait_sf"/>
</dbReference>
<dbReference type="InterPro" id="IPR013025">
    <property type="entry name" value="Ribosomal_uL23-like"/>
</dbReference>
<dbReference type="InterPro" id="IPR012678">
    <property type="entry name" value="Ribosomal_uL23/eL15/eS24_sf"/>
</dbReference>
<dbReference type="NCBIfam" id="NF004359">
    <property type="entry name" value="PRK05738.1-3"/>
    <property type="match status" value="1"/>
</dbReference>
<dbReference type="NCBIfam" id="NF004360">
    <property type="entry name" value="PRK05738.1-5"/>
    <property type="match status" value="1"/>
</dbReference>
<dbReference type="NCBIfam" id="NF004363">
    <property type="entry name" value="PRK05738.2-4"/>
    <property type="match status" value="1"/>
</dbReference>
<dbReference type="PANTHER" id="PTHR11620">
    <property type="entry name" value="60S RIBOSOMAL PROTEIN L23A"/>
    <property type="match status" value="1"/>
</dbReference>
<dbReference type="Pfam" id="PF00276">
    <property type="entry name" value="Ribosomal_L23"/>
    <property type="match status" value="1"/>
</dbReference>
<dbReference type="SUPFAM" id="SSF54189">
    <property type="entry name" value="Ribosomal proteins S24e, L23 and L15e"/>
    <property type="match status" value="1"/>
</dbReference>
<accession>Q16AF2</accession>
<proteinExistence type="inferred from homology"/>
<reference key="1">
    <citation type="journal article" date="2007" name="J. Bacteriol.">
        <title>The complete genome sequence of Roseobacter denitrificans reveals a mixotrophic rather than photosynthetic metabolism.</title>
        <authorList>
            <person name="Swingley W.D."/>
            <person name="Sadekar S."/>
            <person name="Mastrian S.D."/>
            <person name="Matthies H.J."/>
            <person name="Hao J."/>
            <person name="Ramos H."/>
            <person name="Acharya C.R."/>
            <person name="Conrad A.L."/>
            <person name="Taylor H.L."/>
            <person name="Dejesa L.C."/>
            <person name="Shah M.K."/>
            <person name="O'Huallachain M.E."/>
            <person name="Lince M.T."/>
            <person name="Blankenship R.E."/>
            <person name="Beatty J.T."/>
            <person name="Touchman J.W."/>
        </authorList>
    </citation>
    <scope>NUCLEOTIDE SEQUENCE [LARGE SCALE GENOMIC DNA]</scope>
    <source>
        <strain>ATCC 33942 / OCh 114</strain>
    </source>
</reference>
<gene>
    <name evidence="1" type="primary">rplW</name>
    <name type="ordered locus">RD1_1401</name>
</gene>
<name>RL23_ROSDO</name>
<organism>
    <name type="scientific">Roseobacter denitrificans (strain ATCC 33942 / OCh 114)</name>
    <name type="common">Erythrobacter sp. (strain OCh 114)</name>
    <name type="synonym">Roseobacter denitrificans</name>
    <dbReference type="NCBI Taxonomy" id="375451"/>
    <lineage>
        <taxon>Bacteria</taxon>
        <taxon>Pseudomonadati</taxon>
        <taxon>Pseudomonadota</taxon>
        <taxon>Alphaproteobacteria</taxon>
        <taxon>Rhodobacterales</taxon>
        <taxon>Roseobacteraceae</taxon>
        <taxon>Roseobacter</taxon>
    </lineage>
</organism>